<keyword id="KW-0175">Coiled coil</keyword>
<keyword id="KW-0217">Developmental protein</keyword>
<keyword id="KW-0221">Differentiation</keyword>
<keyword id="KW-0287">Flowering</keyword>
<keyword id="KW-1185">Reference proteome</keyword>
<proteinExistence type="evidence at transcript level"/>
<protein>
    <recommendedName>
        <fullName>Inactive FRIGIDA-like protein 2</fullName>
        <shortName>AtFRL2</shortName>
    </recommendedName>
</protein>
<feature type="chain" id="PRO_0000423740" description="Inactive FRIGIDA-like protein 2">
    <location>
        <begin position="1"/>
        <end position="473"/>
    </location>
</feature>
<feature type="region of interest" description="Disordered" evidence="2">
    <location>
        <begin position="356"/>
        <end position="384"/>
    </location>
</feature>
<feature type="coiled-coil region" evidence="1">
    <location>
        <begin position="3"/>
        <end position="35"/>
    </location>
</feature>
<feature type="coiled-coil region" evidence="1">
    <location>
        <begin position="306"/>
        <end position="361"/>
    </location>
</feature>
<feature type="compositionally biased region" description="Polar residues" evidence="2">
    <location>
        <begin position="361"/>
        <end position="373"/>
    </location>
</feature>
<dbReference type="EMBL" id="BK004885">
    <property type="protein sequence ID" value="DAA05286.1"/>
    <property type="molecule type" value="Genomic_DNA"/>
</dbReference>
<dbReference type="EMBL" id="AC079041">
    <property type="protein sequence ID" value="AAG50711.1"/>
    <property type="molecule type" value="Genomic_DNA"/>
</dbReference>
<dbReference type="EMBL" id="CP002684">
    <property type="protein sequence ID" value="AEE31397.1"/>
    <property type="molecule type" value="Genomic_DNA"/>
</dbReference>
<dbReference type="EMBL" id="BT012571">
    <property type="protein sequence ID" value="AAS99715.1"/>
    <property type="molecule type" value="mRNA"/>
</dbReference>
<dbReference type="EMBL" id="AK226705">
    <property type="protein sequence ID" value="BAE98812.1"/>
    <property type="molecule type" value="mRNA"/>
</dbReference>
<dbReference type="PIR" id="A86442">
    <property type="entry name" value="A86442"/>
</dbReference>
<dbReference type="RefSeq" id="NP_174463.1">
    <property type="nucleotide sequence ID" value="NM_102917.4"/>
</dbReference>
<dbReference type="SMR" id="Q9C6S2"/>
<dbReference type="FunCoup" id="Q9C6S2">
    <property type="interactions" value="125"/>
</dbReference>
<dbReference type="STRING" id="3702.Q9C6S2"/>
<dbReference type="GlyGen" id="Q9C6S2">
    <property type="glycosylation" value="1 site"/>
</dbReference>
<dbReference type="PaxDb" id="3702-AT1G31814.1"/>
<dbReference type="EnsemblPlants" id="AT1G31814.1">
    <property type="protein sequence ID" value="AT1G31814.1"/>
    <property type="gene ID" value="AT1G31814"/>
</dbReference>
<dbReference type="GeneID" id="840070"/>
<dbReference type="Gramene" id="AT1G31814.1">
    <property type="protein sequence ID" value="AT1G31814.1"/>
    <property type="gene ID" value="AT1G31814"/>
</dbReference>
<dbReference type="KEGG" id="ath:AT1G31814"/>
<dbReference type="Araport" id="AT1G31814"/>
<dbReference type="TAIR" id="AT1G31814">
    <property type="gene designation" value="FRL2"/>
</dbReference>
<dbReference type="eggNOG" id="ENOG502QUKS">
    <property type="taxonomic scope" value="Eukaryota"/>
</dbReference>
<dbReference type="HOGENOM" id="CLU_032433_0_0_1"/>
<dbReference type="InParanoid" id="Q9C6S2"/>
<dbReference type="OMA" id="IEGSYHC"/>
<dbReference type="PhylomeDB" id="Q9C6S2"/>
<dbReference type="PRO" id="PR:Q9C6S2"/>
<dbReference type="Proteomes" id="UP000006548">
    <property type="component" value="Chromosome 1"/>
</dbReference>
<dbReference type="ExpressionAtlas" id="Q9C6S2">
    <property type="expression patterns" value="baseline and differential"/>
</dbReference>
<dbReference type="GO" id="GO:0030154">
    <property type="term" value="P:cell differentiation"/>
    <property type="evidence" value="ECO:0007669"/>
    <property type="project" value="UniProtKB-KW"/>
</dbReference>
<dbReference type="GO" id="GO:0009908">
    <property type="term" value="P:flower development"/>
    <property type="evidence" value="ECO:0007669"/>
    <property type="project" value="UniProtKB-KW"/>
</dbReference>
<dbReference type="GO" id="GO:0010228">
    <property type="term" value="P:vegetative to reproductive phase transition of meristem"/>
    <property type="evidence" value="ECO:0000315"/>
    <property type="project" value="TAIR"/>
</dbReference>
<dbReference type="InterPro" id="IPR012474">
    <property type="entry name" value="Frigida"/>
</dbReference>
<dbReference type="PANTHER" id="PTHR31791">
    <property type="entry name" value="FRIGIDA-LIKE PROTEIN 3-RELATED"/>
    <property type="match status" value="1"/>
</dbReference>
<dbReference type="PANTHER" id="PTHR31791:SF47">
    <property type="entry name" value="INACTIVE FRIGIDA-LIKE PROTEIN 2"/>
    <property type="match status" value="1"/>
</dbReference>
<dbReference type="Pfam" id="PF07899">
    <property type="entry name" value="Frigida"/>
    <property type="match status" value="1"/>
</dbReference>
<name>FRL2I_ARATH</name>
<comment type="function">
    <text evidence="3 4">Inactive FRIGIDA-like 2 protein.</text>
</comment>
<comment type="tissue specificity">
    <text evidence="5">Expressed at low levels throughout the plant, with slightly higher expression in developing seeds and the highest expression in pollen.</text>
</comment>
<comment type="disruption phenotype">
    <text evidence="3">No effect on flowering time, due to a partial redundancy with FRL1. Frl1 and frl2 double mutants flower earlier than frl1 single mutant.</text>
</comment>
<comment type="miscellaneous">
    <text evidence="7">In cv. Columbia and cv. Landsberg erecta, either FRL1 or FRL2, but not both, is functional and required for FRI-mediated up-regulation of FLC (PubMed:17056759).</text>
</comment>
<comment type="similarity">
    <text evidence="6">Belongs to the Frigida family.</text>
</comment>
<comment type="caution">
    <text evidence="6">The sequence displayed is a non-functional allele found in cv. Columbia. The protein in cv. Landsberg erecta (AC A0SWL0) only differ by two residues in positions 132 and 401 (Pro to Ala and Gln to Leu changes, respectively); these variations leading to activate the protein in cv. Landsberg erecta.</text>
</comment>
<organism>
    <name type="scientific">Arabidopsis thaliana</name>
    <name type="common">Mouse-ear cress</name>
    <dbReference type="NCBI Taxonomy" id="3702"/>
    <lineage>
        <taxon>Eukaryota</taxon>
        <taxon>Viridiplantae</taxon>
        <taxon>Streptophyta</taxon>
        <taxon>Embryophyta</taxon>
        <taxon>Tracheophyta</taxon>
        <taxon>Spermatophyta</taxon>
        <taxon>Magnoliopsida</taxon>
        <taxon>eudicotyledons</taxon>
        <taxon>Gunneridae</taxon>
        <taxon>Pentapetalae</taxon>
        <taxon>rosids</taxon>
        <taxon>malvids</taxon>
        <taxon>Brassicales</taxon>
        <taxon>Brassicaceae</taxon>
        <taxon>Camelineae</taxon>
        <taxon>Arabidopsis</taxon>
    </lineage>
</organism>
<gene>
    <name type="primary">FRL2</name>
    <name type="ordered locus">At1g31814</name>
</gene>
<accession>Q9C6S2</accession>
<sequence>MTAAESIAASINQIDEKKQKLKKAFDDLQAHRSLLSPSFNLSWSEIDSHFSSLQSSLFNRLQSAVTSSNSGNIETPTAVTTETPVLWPELRKFCEKNDGKGLGNYMIENSRKRLSINEELPNAIRCSENPAPLVLDAIEGSYHCSSPSSSSSARAIDVKRIFVLLLEALIEINANLTNDLRERARTIAYDWKPNIGNKPSEALGFLHLVAAFELGSLFSTEEICDYIFLISKYKQATTICKKIGLDRNRIGVLVQKFLDTGRLLVAIRFIYENEMVGEFEPVSILKTSLKNSREAAKRVCAEGNYSLKVQNEATDKELSALRAVIKVVKEKNIESEFMEEKLEECVKELEDQKAQRKRATKFNSPANPQQPQEQKVDNKRPRVANGSSMEYNLTIPPLRPQQQPPLLPTPSQILQVNPYGLLSSILPGVAVPYGNPRALFGSVPAPASRPVFYVQQTGYGMPPPQYRPPYYPQ</sequence>
<evidence type="ECO:0000255" key="1"/>
<evidence type="ECO:0000256" key="2">
    <source>
        <dbReference type="SAM" id="MobiDB-lite"/>
    </source>
</evidence>
<evidence type="ECO:0000269" key="3">
    <source>
    </source>
</evidence>
<evidence type="ECO:0000269" key="4">
    <source>
    </source>
</evidence>
<evidence type="ECO:0000269" key="5">
    <source>
    </source>
</evidence>
<evidence type="ECO:0000305" key="6"/>
<evidence type="ECO:0000305" key="7">
    <source>
    </source>
</evidence>
<reference key="1">
    <citation type="journal article" date="2004" name="Proc. Natl. Acad. Sci. U.S.A.">
        <title>FRIGIDA-related genes are required for the winter-annual habit in Arabidopsis.</title>
        <authorList>
            <person name="Michaels S.D."/>
            <person name="Bezerra I.C."/>
            <person name="Amasino R.M."/>
        </authorList>
    </citation>
    <scope>NUCLEOTIDE SEQUENCE [GENOMIC DNA]</scope>
    <scope>FUNCTION</scope>
    <scope>DISRUPTION PHENOTYPE</scope>
    <scope>GENE FAMILY</scope>
</reference>
<reference key="2">
    <citation type="journal article" date="2000" name="Nature">
        <title>Sequence and analysis of chromosome 1 of the plant Arabidopsis thaliana.</title>
        <authorList>
            <person name="Theologis A."/>
            <person name="Ecker J.R."/>
            <person name="Palm C.J."/>
            <person name="Federspiel N.A."/>
            <person name="Kaul S."/>
            <person name="White O."/>
            <person name="Alonso J."/>
            <person name="Altafi H."/>
            <person name="Araujo R."/>
            <person name="Bowman C.L."/>
            <person name="Brooks S.Y."/>
            <person name="Buehler E."/>
            <person name="Chan A."/>
            <person name="Chao Q."/>
            <person name="Chen H."/>
            <person name="Cheuk R.F."/>
            <person name="Chin C.W."/>
            <person name="Chung M.K."/>
            <person name="Conn L."/>
            <person name="Conway A.B."/>
            <person name="Conway A.R."/>
            <person name="Creasy T.H."/>
            <person name="Dewar K."/>
            <person name="Dunn P."/>
            <person name="Etgu P."/>
            <person name="Feldblyum T.V."/>
            <person name="Feng J.-D."/>
            <person name="Fong B."/>
            <person name="Fujii C.Y."/>
            <person name="Gill J.E."/>
            <person name="Goldsmith A.D."/>
            <person name="Haas B."/>
            <person name="Hansen N.F."/>
            <person name="Hughes B."/>
            <person name="Huizar L."/>
            <person name="Hunter J.L."/>
            <person name="Jenkins J."/>
            <person name="Johnson-Hopson C."/>
            <person name="Khan S."/>
            <person name="Khaykin E."/>
            <person name="Kim C.J."/>
            <person name="Koo H.L."/>
            <person name="Kremenetskaia I."/>
            <person name="Kurtz D.B."/>
            <person name="Kwan A."/>
            <person name="Lam B."/>
            <person name="Langin-Hooper S."/>
            <person name="Lee A."/>
            <person name="Lee J.M."/>
            <person name="Lenz C.A."/>
            <person name="Li J.H."/>
            <person name="Li Y.-P."/>
            <person name="Lin X."/>
            <person name="Liu S.X."/>
            <person name="Liu Z.A."/>
            <person name="Luros J.S."/>
            <person name="Maiti R."/>
            <person name="Marziali A."/>
            <person name="Militscher J."/>
            <person name="Miranda M."/>
            <person name="Nguyen M."/>
            <person name="Nierman W.C."/>
            <person name="Osborne B.I."/>
            <person name="Pai G."/>
            <person name="Peterson J."/>
            <person name="Pham P.K."/>
            <person name="Rizzo M."/>
            <person name="Rooney T."/>
            <person name="Rowley D."/>
            <person name="Sakano H."/>
            <person name="Salzberg S.L."/>
            <person name="Schwartz J.R."/>
            <person name="Shinn P."/>
            <person name="Southwick A.M."/>
            <person name="Sun H."/>
            <person name="Tallon L.J."/>
            <person name="Tambunga G."/>
            <person name="Toriumi M.J."/>
            <person name="Town C.D."/>
            <person name="Utterback T."/>
            <person name="Van Aken S."/>
            <person name="Vaysberg M."/>
            <person name="Vysotskaia V.S."/>
            <person name="Walker M."/>
            <person name="Wu D."/>
            <person name="Yu G."/>
            <person name="Fraser C.M."/>
            <person name="Venter J.C."/>
            <person name="Davis R.W."/>
        </authorList>
    </citation>
    <scope>NUCLEOTIDE SEQUENCE [LARGE SCALE GENOMIC DNA]</scope>
    <source>
        <strain>cv. Columbia</strain>
    </source>
</reference>
<reference key="3">
    <citation type="journal article" date="2017" name="Plant J.">
        <title>Araport11: a complete reannotation of the Arabidopsis thaliana reference genome.</title>
        <authorList>
            <person name="Cheng C.Y."/>
            <person name="Krishnakumar V."/>
            <person name="Chan A.P."/>
            <person name="Thibaud-Nissen F."/>
            <person name="Schobel S."/>
            <person name="Town C.D."/>
        </authorList>
    </citation>
    <scope>GENOME REANNOTATION</scope>
    <source>
        <strain>cv. Columbia</strain>
    </source>
</reference>
<reference key="4">
    <citation type="submission" date="2004-04" db="EMBL/GenBank/DDBJ databases">
        <title>Arabidopsis ORF clones.</title>
        <authorList>
            <person name="Shinn P."/>
            <person name="Chen H."/>
            <person name="Cheuk R."/>
            <person name="Kim C.J."/>
            <person name="Carninci P."/>
            <person name="Hayashizaki Y."/>
            <person name="Ishida J."/>
            <person name="Kamiya A."/>
            <person name="Kawai J."/>
            <person name="Narusaka M."/>
            <person name="Sakurai T."/>
            <person name="Satou M."/>
            <person name="Seki M."/>
            <person name="Shinozaki K."/>
            <person name="Ecker J.R."/>
        </authorList>
    </citation>
    <scope>NUCLEOTIDE SEQUENCE [LARGE SCALE MRNA]</scope>
</reference>
<reference key="5">
    <citation type="submission" date="2006-07" db="EMBL/GenBank/DDBJ databases">
        <title>Large-scale analysis of RIKEN Arabidopsis full-length (RAFL) cDNAs.</title>
        <authorList>
            <person name="Totoki Y."/>
            <person name="Seki M."/>
            <person name="Ishida J."/>
            <person name="Nakajima M."/>
            <person name="Enju A."/>
            <person name="Kamiya A."/>
            <person name="Narusaka M."/>
            <person name="Shin-i T."/>
            <person name="Nakagawa M."/>
            <person name="Sakamoto N."/>
            <person name="Oishi K."/>
            <person name="Kohara Y."/>
            <person name="Kobayashi M."/>
            <person name="Toyoda A."/>
            <person name="Sakaki Y."/>
            <person name="Sakurai T."/>
            <person name="Iida K."/>
            <person name="Akiyama K."/>
            <person name="Satou M."/>
            <person name="Toyoda T."/>
            <person name="Konagaya A."/>
            <person name="Carninci P."/>
            <person name="Kawai J."/>
            <person name="Hayashizaki Y."/>
            <person name="Shinozaki K."/>
        </authorList>
    </citation>
    <scope>NUCLEOTIDE SEQUENCE [LARGE SCALE MRNA]</scope>
    <source>
        <strain>cv. Columbia</strain>
    </source>
</reference>
<reference key="6">
    <citation type="journal article" date="2006" name="Plant Physiol.">
        <title>FRIGIDA LIKE 2 is a functional allele in Landsberg erecta and compensates for a nonsense allele of FRIGIDA LIKE 1.</title>
        <authorList>
            <person name="Schlappi M.R."/>
        </authorList>
    </citation>
    <scope>FUNCTION</scope>
    <source>
        <strain>cv. Columbia</strain>
        <strain>cv. Landsberg erecta</strain>
    </source>
</reference>
<reference key="7">
    <citation type="journal article" date="2010" name="Plant Mol. Biol.">
        <title>FRIGIDA and related proteins have a conserved central domain and family specific N- and C- terminal regions that are functionally important.</title>
        <authorList>
            <person name="Risk J.M."/>
            <person name="Laurie R.E."/>
            <person name="Macknight R.C."/>
            <person name="Day C.L."/>
        </authorList>
    </citation>
    <scope>GENE FAMILY</scope>
    <scope>NOMENCLATURE</scope>
    <scope>TISSUE SPECIFICITY</scope>
    <source>
        <strain>cv. Columbia</strain>
    </source>
</reference>